<evidence type="ECO:0000255" key="1">
    <source>
        <dbReference type="HAMAP-Rule" id="MF_01012"/>
    </source>
</evidence>
<organism>
    <name type="scientific">Escherichia coli (strain ATCC 8739 / DSM 1576 / NBRC 3972 / NCIMB 8545 / WDCM 00012 / Crooks)</name>
    <dbReference type="NCBI Taxonomy" id="481805"/>
    <lineage>
        <taxon>Bacteria</taxon>
        <taxon>Pseudomonadati</taxon>
        <taxon>Pseudomonadota</taxon>
        <taxon>Gammaproteobacteria</taxon>
        <taxon>Enterobacterales</taxon>
        <taxon>Enterobacteriaceae</taxon>
        <taxon>Escherichia</taxon>
    </lineage>
</organism>
<sequence>MQCALYDAGRCRSCQWITQPIPEQLSAKTADLKNLLADFPVEEWCAPVSGPEQGFRNKAKMVVSGSVEKPLLGMLHRDGTPEDLCDCPLYPASFAPVFAALKPFIARAGLTPYNVARKRGELKYILLTESQSDGGMMLRFVLRSETKLAQLRKALPWLQEQLPQLKVITVNIQPVHMAIMEGETEIYLTEQQALAERFNDVPLWVRPQSFFQTNPAVASQLYATARDWVRQLPVKHMWDLFCGVGGFGLHCATPDMQLTGIEIAPEAIACAKQSAAELGLTRLQFQALDSTQFATAQGEVPELVLVNPPRRGIGKPLCDYLSTMAPRFIIYSSCNAQTMAKDVRELPGYRIERVQLFDMFPHTAHYEVLTLLVKQ</sequence>
<gene>
    <name evidence="1" type="primary">rlmC</name>
    <name type="synonym">rumB</name>
    <name type="ordered locus">EcolC_2737</name>
</gene>
<protein>
    <recommendedName>
        <fullName evidence="1">23S rRNA (uracil(747)-C(5))-methyltransferase RlmC</fullName>
        <ecNumber evidence="1">2.1.1.189</ecNumber>
    </recommendedName>
    <alternativeName>
        <fullName evidence="1">23S rRNA(m5U747)-methyltransferase</fullName>
    </alternativeName>
</protein>
<comment type="function">
    <text evidence="1">Catalyzes the formation of 5-methyl-uridine at position 747 (m5U747) in 23S rRNA.</text>
</comment>
<comment type="catalytic activity">
    <reaction evidence="1">
        <text>uridine(747) in 23S rRNA + S-adenosyl-L-methionine = 5-methyluridine(747) in 23S rRNA + S-adenosyl-L-homocysteine + H(+)</text>
        <dbReference type="Rhea" id="RHEA:42628"/>
        <dbReference type="Rhea" id="RHEA-COMP:10154"/>
        <dbReference type="Rhea" id="RHEA-COMP:10155"/>
        <dbReference type="ChEBI" id="CHEBI:15378"/>
        <dbReference type="ChEBI" id="CHEBI:57856"/>
        <dbReference type="ChEBI" id="CHEBI:59789"/>
        <dbReference type="ChEBI" id="CHEBI:65315"/>
        <dbReference type="ChEBI" id="CHEBI:74447"/>
        <dbReference type="EC" id="2.1.1.189"/>
    </reaction>
</comment>
<comment type="similarity">
    <text evidence="1">Belongs to the class I-like SAM-binding methyltransferase superfamily. RNA M5U methyltransferase family. RlmC subfamily.</text>
</comment>
<feature type="chain" id="PRO_1000084045" description="23S rRNA (uracil(747)-C(5))-methyltransferase RlmC">
    <location>
        <begin position="1"/>
        <end position="375"/>
    </location>
</feature>
<feature type="active site" description="Nucleophile" evidence="1">
    <location>
        <position position="334"/>
    </location>
</feature>
<feature type="binding site" evidence="1">
    <location>
        <position position="3"/>
    </location>
    <ligand>
        <name>[4Fe-4S] cluster</name>
        <dbReference type="ChEBI" id="CHEBI:49883"/>
    </ligand>
</feature>
<feature type="binding site" evidence="1">
    <location>
        <position position="11"/>
    </location>
    <ligand>
        <name>[4Fe-4S] cluster</name>
        <dbReference type="ChEBI" id="CHEBI:49883"/>
    </ligand>
</feature>
<feature type="binding site" evidence="1">
    <location>
        <position position="14"/>
    </location>
    <ligand>
        <name>[4Fe-4S] cluster</name>
        <dbReference type="ChEBI" id="CHEBI:49883"/>
    </ligand>
</feature>
<feature type="binding site" evidence="1">
    <location>
        <position position="87"/>
    </location>
    <ligand>
        <name>[4Fe-4S] cluster</name>
        <dbReference type="ChEBI" id="CHEBI:49883"/>
    </ligand>
</feature>
<feature type="binding site" evidence="1">
    <location>
        <position position="212"/>
    </location>
    <ligand>
        <name>S-adenosyl-L-methionine</name>
        <dbReference type="ChEBI" id="CHEBI:59789"/>
    </ligand>
</feature>
<feature type="binding site" evidence="1">
    <location>
        <position position="241"/>
    </location>
    <ligand>
        <name>S-adenosyl-L-methionine</name>
        <dbReference type="ChEBI" id="CHEBI:59789"/>
    </ligand>
</feature>
<feature type="binding site" evidence="1">
    <location>
        <position position="262"/>
    </location>
    <ligand>
        <name>S-adenosyl-L-methionine</name>
        <dbReference type="ChEBI" id="CHEBI:59789"/>
    </ligand>
</feature>
<feature type="binding site" evidence="1">
    <location>
        <position position="307"/>
    </location>
    <ligand>
        <name>S-adenosyl-L-methionine</name>
        <dbReference type="ChEBI" id="CHEBI:59789"/>
    </ligand>
</feature>
<proteinExistence type="inferred from homology"/>
<reference key="1">
    <citation type="submission" date="2008-02" db="EMBL/GenBank/DDBJ databases">
        <title>Complete sequence of Escherichia coli C str. ATCC 8739.</title>
        <authorList>
            <person name="Copeland A."/>
            <person name="Lucas S."/>
            <person name="Lapidus A."/>
            <person name="Glavina del Rio T."/>
            <person name="Dalin E."/>
            <person name="Tice H."/>
            <person name="Bruce D."/>
            <person name="Goodwin L."/>
            <person name="Pitluck S."/>
            <person name="Kiss H."/>
            <person name="Brettin T."/>
            <person name="Detter J.C."/>
            <person name="Han C."/>
            <person name="Kuske C.R."/>
            <person name="Schmutz J."/>
            <person name="Larimer F."/>
            <person name="Land M."/>
            <person name="Hauser L."/>
            <person name="Kyrpides N."/>
            <person name="Mikhailova N."/>
            <person name="Ingram L."/>
            <person name="Richardson P."/>
        </authorList>
    </citation>
    <scope>NUCLEOTIDE SEQUENCE [LARGE SCALE GENOMIC DNA]</scope>
    <source>
        <strain>ATCC 8739 / DSM 1576 / NBRC 3972 / NCIMB 8545 / WDCM 00012 / Crooks</strain>
    </source>
</reference>
<dbReference type="EC" id="2.1.1.189" evidence="1"/>
<dbReference type="EMBL" id="CP000946">
    <property type="protein sequence ID" value="ACA78365.1"/>
    <property type="molecule type" value="Genomic_DNA"/>
</dbReference>
<dbReference type="RefSeq" id="WP_001149740.1">
    <property type="nucleotide sequence ID" value="NZ_MTFT01000046.1"/>
</dbReference>
<dbReference type="SMR" id="B1IWR3"/>
<dbReference type="KEGG" id="ecl:EcolC_2737"/>
<dbReference type="HOGENOM" id="CLU_014689_0_0_6"/>
<dbReference type="GO" id="GO:0051539">
    <property type="term" value="F:4 iron, 4 sulfur cluster binding"/>
    <property type="evidence" value="ECO:0007669"/>
    <property type="project" value="UniProtKB-KW"/>
</dbReference>
<dbReference type="GO" id="GO:0005506">
    <property type="term" value="F:iron ion binding"/>
    <property type="evidence" value="ECO:0007669"/>
    <property type="project" value="UniProtKB-UniRule"/>
</dbReference>
<dbReference type="GO" id="GO:0070041">
    <property type="term" value="F:rRNA (uridine-C5-)-methyltransferase activity"/>
    <property type="evidence" value="ECO:0007669"/>
    <property type="project" value="UniProtKB-UniRule"/>
</dbReference>
<dbReference type="GO" id="GO:0070475">
    <property type="term" value="P:rRNA base methylation"/>
    <property type="evidence" value="ECO:0007669"/>
    <property type="project" value="TreeGrafter"/>
</dbReference>
<dbReference type="CDD" id="cd02440">
    <property type="entry name" value="AdoMet_MTases"/>
    <property type="match status" value="1"/>
</dbReference>
<dbReference type="FunFam" id="2.40.50.1070:FF:000002">
    <property type="entry name" value="23S rRNA (uracil(747)-C(5))-methyltransferase RlmC"/>
    <property type="match status" value="1"/>
</dbReference>
<dbReference type="FunFam" id="3.40.50.150:FF:000049">
    <property type="entry name" value="23S rRNA (uracil(747)-C(5))-methyltransferase RlmC"/>
    <property type="match status" value="1"/>
</dbReference>
<dbReference type="Gene3D" id="2.40.50.1070">
    <property type="match status" value="1"/>
</dbReference>
<dbReference type="Gene3D" id="3.40.50.150">
    <property type="entry name" value="Vaccinia Virus protein VP39"/>
    <property type="match status" value="1"/>
</dbReference>
<dbReference type="HAMAP" id="MF_01012">
    <property type="entry name" value="23SrRNA_methyltr_RlmC"/>
    <property type="match status" value="1"/>
</dbReference>
<dbReference type="InterPro" id="IPR011825">
    <property type="entry name" value="23SrRNA_MeTrfase_RlmC"/>
</dbReference>
<dbReference type="InterPro" id="IPR030390">
    <property type="entry name" value="MeTrfase_TrmA_AS"/>
</dbReference>
<dbReference type="InterPro" id="IPR030391">
    <property type="entry name" value="MeTrfase_TrmA_CS"/>
</dbReference>
<dbReference type="InterPro" id="IPR029063">
    <property type="entry name" value="SAM-dependent_MTases_sf"/>
</dbReference>
<dbReference type="InterPro" id="IPR010280">
    <property type="entry name" value="U5_MeTrfase_fam"/>
</dbReference>
<dbReference type="NCBIfam" id="TIGR02085">
    <property type="entry name" value="meth_trns_rumB"/>
    <property type="match status" value="1"/>
</dbReference>
<dbReference type="PANTHER" id="PTHR11061">
    <property type="entry name" value="RNA M5U METHYLTRANSFERASE"/>
    <property type="match status" value="1"/>
</dbReference>
<dbReference type="PANTHER" id="PTHR11061:SF30">
    <property type="entry name" value="TRNA (URACIL(54)-C(5))-METHYLTRANSFERASE"/>
    <property type="match status" value="1"/>
</dbReference>
<dbReference type="Pfam" id="PF05958">
    <property type="entry name" value="tRNA_U5-meth_tr"/>
    <property type="match status" value="1"/>
</dbReference>
<dbReference type="SUPFAM" id="SSF53335">
    <property type="entry name" value="S-adenosyl-L-methionine-dependent methyltransferases"/>
    <property type="match status" value="1"/>
</dbReference>
<dbReference type="PROSITE" id="PS51687">
    <property type="entry name" value="SAM_MT_RNA_M5U"/>
    <property type="match status" value="1"/>
</dbReference>
<dbReference type="PROSITE" id="PS01230">
    <property type="entry name" value="TRMA_1"/>
    <property type="match status" value="1"/>
</dbReference>
<dbReference type="PROSITE" id="PS01231">
    <property type="entry name" value="TRMA_2"/>
    <property type="match status" value="1"/>
</dbReference>
<name>RLMC_ECOLC</name>
<keyword id="KW-0004">4Fe-4S</keyword>
<keyword id="KW-0408">Iron</keyword>
<keyword id="KW-0411">Iron-sulfur</keyword>
<keyword id="KW-0479">Metal-binding</keyword>
<keyword id="KW-0489">Methyltransferase</keyword>
<keyword id="KW-0698">rRNA processing</keyword>
<keyword id="KW-0949">S-adenosyl-L-methionine</keyword>
<keyword id="KW-0808">Transferase</keyword>
<accession>B1IWR3</accession>